<protein>
    <recommendedName>
        <fullName>Transmembrane protein 253</fullName>
    </recommendedName>
</protein>
<proteinExistence type="evidence at transcript level"/>
<comment type="subcellular location">
    <subcellularLocation>
        <location evidence="3">Membrane</location>
        <topology evidence="3">Multi-pass membrane protein</topology>
    </subcellularLocation>
</comment>
<evidence type="ECO:0000255" key="1"/>
<evidence type="ECO:0000256" key="2">
    <source>
        <dbReference type="SAM" id="MobiDB-lite"/>
    </source>
</evidence>
<evidence type="ECO:0000305" key="3"/>
<sequence length="204" mass="22415">MDQNANQPRQERPSVRLEKLQHWARHKQSGRLLVLAVSQVWLAIAMVPFTISVSCLTSACHLVTALPLWPGASGLLTGIITLELRRAPCIWKVRAMMISNTFNLILGFVAVVIEVMKTALGTASMDSSQSTGLLVLELSAEAFTLAGVLVSTYALFLLSQRKPGYFKRSRLQYRELQEGLSEMEEVSGLENGPVVASTGNRTDE</sequence>
<keyword id="KW-0472">Membrane</keyword>
<keyword id="KW-1185">Reference proteome</keyword>
<keyword id="KW-0812">Transmembrane</keyword>
<keyword id="KW-1133">Transmembrane helix</keyword>
<name>TM253_MOUSE</name>
<gene>
    <name type="primary">Tmem253</name>
</gene>
<organism>
    <name type="scientific">Mus musculus</name>
    <name type="common">Mouse</name>
    <dbReference type="NCBI Taxonomy" id="10090"/>
    <lineage>
        <taxon>Eukaryota</taxon>
        <taxon>Metazoa</taxon>
        <taxon>Chordata</taxon>
        <taxon>Craniata</taxon>
        <taxon>Vertebrata</taxon>
        <taxon>Euteleostomi</taxon>
        <taxon>Mammalia</taxon>
        <taxon>Eutheria</taxon>
        <taxon>Euarchontoglires</taxon>
        <taxon>Glires</taxon>
        <taxon>Rodentia</taxon>
        <taxon>Myomorpha</taxon>
        <taxon>Muroidea</taxon>
        <taxon>Muridae</taxon>
        <taxon>Murinae</taxon>
        <taxon>Mus</taxon>
        <taxon>Mus</taxon>
    </lineage>
</organism>
<reference key="1">
    <citation type="journal article" date="2005" name="Science">
        <title>The transcriptional landscape of the mammalian genome.</title>
        <authorList>
            <person name="Carninci P."/>
            <person name="Kasukawa T."/>
            <person name="Katayama S."/>
            <person name="Gough J."/>
            <person name="Frith M.C."/>
            <person name="Maeda N."/>
            <person name="Oyama R."/>
            <person name="Ravasi T."/>
            <person name="Lenhard B."/>
            <person name="Wells C."/>
            <person name="Kodzius R."/>
            <person name="Shimokawa K."/>
            <person name="Bajic V.B."/>
            <person name="Brenner S.E."/>
            <person name="Batalov S."/>
            <person name="Forrest A.R."/>
            <person name="Zavolan M."/>
            <person name="Davis M.J."/>
            <person name="Wilming L.G."/>
            <person name="Aidinis V."/>
            <person name="Allen J.E."/>
            <person name="Ambesi-Impiombato A."/>
            <person name="Apweiler R."/>
            <person name="Aturaliya R.N."/>
            <person name="Bailey T.L."/>
            <person name="Bansal M."/>
            <person name="Baxter L."/>
            <person name="Beisel K.W."/>
            <person name="Bersano T."/>
            <person name="Bono H."/>
            <person name="Chalk A.M."/>
            <person name="Chiu K.P."/>
            <person name="Choudhary V."/>
            <person name="Christoffels A."/>
            <person name="Clutterbuck D.R."/>
            <person name="Crowe M.L."/>
            <person name="Dalla E."/>
            <person name="Dalrymple B.P."/>
            <person name="de Bono B."/>
            <person name="Della Gatta G."/>
            <person name="di Bernardo D."/>
            <person name="Down T."/>
            <person name="Engstrom P."/>
            <person name="Fagiolini M."/>
            <person name="Faulkner G."/>
            <person name="Fletcher C.F."/>
            <person name="Fukushima T."/>
            <person name="Furuno M."/>
            <person name="Futaki S."/>
            <person name="Gariboldi M."/>
            <person name="Georgii-Hemming P."/>
            <person name="Gingeras T.R."/>
            <person name="Gojobori T."/>
            <person name="Green R.E."/>
            <person name="Gustincich S."/>
            <person name="Harbers M."/>
            <person name="Hayashi Y."/>
            <person name="Hensch T.K."/>
            <person name="Hirokawa N."/>
            <person name="Hill D."/>
            <person name="Huminiecki L."/>
            <person name="Iacono M."/>
            <person name="Ikeo K."/>
            <person name="Iwama A."/>
            <person name="Ishikawa T."/>
            <person name="Jakt M."/>
            <person name="Kanapin A."/>
            <person name="Katoh M."/>
            <person name="Kawasawa Y."/>
            <person name="Kelso J."/>
            <person name="Kitamura H."/>
            <person name="Kitano H."/>
            <person name="Kollias G."/>
            <person name="Krishnan S.P."/>
            <person name="Kruger A."/>
            <person name="Kummerfeld S.K."/>
            <person name="Kurochkin I.V."/>
            <person name="Lareau L.F."/>
            <person name="Lazarevic D."/>
            <person name="Lipovich L."/>
            <person name="Liu J."/>
            <person name="Liuni S."/>
            <person name="McWilliam S."/>
            <person name="Madan Babu M."/>
            <person name="Madera M."/>
            <person name="Marchionni L."/>
            <person name="Matsuda H."/>
            <person name="Matsuzawa S."/>
            <person name="Miki H."/>
            <person name="Mignone F."/>
            <person name="Miyake S."/>
            <person name="Morris K."/>
            <person name="Mottagui-Tabar S."/>
            <person name="Mulder N."/>
            <person name="Nakano N."/>
            <person name="Nakauchi H."/>
            <person name="Ng P."/>
            <person name="Nilsson R."/>
            <person name="Nishiguchi S."/>
            <person name="Nishikawa S."/>
            <person name="Nori F."/>
            <person name="Ohara O."/>
            <person name="Okazaki Y."/>
            <person name="Orlando V."/>
            <person name="Pang K.C."/>
            <person name="Pavan W.J."/>
            <person name="Pavesi G."/>
            <person name="Pesole G."/>
            <person name="Petrovsky N."/>
            <person name="Piazza S."/>
            <person name="Reed J."/>
            <person name="Reid J.F."/>
            <person name="Ring B.Z."/>
            <person name="Ringwald M."/>
            <person name="Rost B."/>
            <person name="Ruan Y."/>
            <person name="Salzberg S.L."/>
            <person name="Sandelin A."/>
            <person name="Schneider C."/>
            <person name="Schoenbach C."/>
            <person name="Sekiguchi K."/>
            <person name="Semple C.A."/>
            <person name="Seno S."/>
            <person name="Sessa L."/>
            <person name="Sheng Y."/>
            <person name="Shibata Y."/>
            <person name="Shimada H."/>
            <person name="Shimada K."/>
            <person name="Silva D."/>
            <person name="Sinclair B."/>
            <person name="Sperling S."/>
            <person name="Stupka E."/>
            <person name="Sugiura K."/>
            <person name="Sultana R."/>
            <person name="Takenaka Y."/>
            <person name="Taki K."/>
            <person name="Tammoja K."/>
            <person name="Tan S.L."/>
            <person name="Tang S."/>
            <person name="Taylor M.S."/>
            <person name="Tegner J."/>
            <person name="Teichmann S.A."/>
            <person name="Ueda H.R."/>
            <person name="van Nimwegen E."/>
            <person name="Verardo R."/>
            <person name="Wei C.L."/>
            <person name="Yagi K."/>
            <person name="Yamanishi H."/>
            <person name="Zabarovsky E."/>
            <person name="Zhu S."/>
            <person name="Zimmer A."/>
            <person name="Hide W."/>
            <person name="Bult C."/>
            <person name="Grimmond S.M."/>
            <person name="Teasdale R.D."/>
            <person name="Liu E.T."/>
            <person name="Brusic V."/>
            <person name="Quackenbush J."/>
            <person name="Wahlestedt C."/>
            <person name="Mattick J.S."/>
            <person name="Hume D.A."/>
            <person name="Kai C."/>
            <person name="Sasaki D."/>
            <person name="Tomaru Y."/>
            <person name="Fukuda S."/>
            <person name="Kanamori-Katayama M."/>
            <person name="Suzuki M."/>
            <person name="Aoki J."/>
            <person name="Arakawa T."/>
            <person name="Iida J."/>
            <person name="Imamura K."/>
            <person name="Itoh M."/>
            <person name="Kato T."/>
            <person name="Kawaji H."/>
            <person name="Kawagashira N."/>
            <person name="Kawashima T."/>
            <person name="Kojima M."/>
            <person name="Kondo S."/>
            <person name="Konno H."/>
            <person name="Nakano K."/>
            <person name="Ninomiya N."/>
            <person name="Nishio T."/>
            <person name="Okada M."/>
            <person name="Plessy C."/>
            <person name="Shibata K."/>
            <person name="Shiraki T."/>
            <person name="Suzuki S."/>
            <person name="Tagami M."/>
            <person name="Waki K."/>
            <person name="Watahiki A."/>
            <person name="Okamura-Oho Y."/>
            <person name="Suzuki H."/>
            <person name="Kawai J."/>
            <person name="Hayashizaki Y."/>
        </authorList>
    </citation>
    <scope>NUCLEOTIDE SEQUENCE [LARGE SCALE MRNA]</scope>
    <source>
        <strain>C57BL/6J</strain>
        <tissue>Intestinal mucosa</tissue>
    </source>
</reference>
<reference key="2">
    <citation type="journal article" date="2004" name="Genome Res.">
        <title>The status, quality, and expansion of the NIH full-length cDNA project: the Mammalian Gene Collection (MGC).</title>
        <authorList>
            <consortium name="The MGC Project Team"/>
        </authorList>
    </citation>
    <scope>NUCLEOTIDE SEQUENCE [LARGE SCALE MRNA]</scope>
    <source>
        <tissue>Brain</tissue>
    </source>
</reference>
<dbReference type="EMBL" id="AK144313">
    <property type="protein sequence ID" value="BAE25829.1"/>
    <property type="molecule type" value="mRNA"/>
</dbReference>
<dbReference type="EMBL" id="BC147689">
    <property type="protein sequence ID" value="AAI47690.1"/>
    <property type="molecule type" value="mRNA"/>
</dbReference>
<dbReference type="CCDS" id="CCDS27049.1"/>
<dbReference type="RefSeq" id="NP_001028977.1">
    <property type="nucleotide sequence ID" value="NM_001033805.3"/>
</dbReference>
<dbReference type="RefSeq" id="XP_011243430.1">
    <property type="nucleotide sequence ID" value="XM_011245128.3"/>
</dbReference>
<dbReference type="RefSeq" id="XP_017171594.1">
    <property type="nucleotide sequence ID" value="XM_017316105.3"/>
</dbReference>
<dbReference type="RefSeq" id="XP_036014668.1">
    <property type="nucleotide sequence ID" value="XM_036158775.1"/>
</dbReference>
<dbReference type="SMR" id="Q3UNB8"/>
<dbReference type="FunCoup" id="Q3UNB8">
    <property type="interactions" value="1"/>
</dbReference>
<dbReference type="STRING" id="10090.ENSMUSP00000098203"/>
<dbReference type="PhosphoSitePlus" id="Q3UNB8"/>
<dbReference type="PaxDb" id="10090-ENSMUSP00000098203"/>
<dbReference type="PeptideAtlas" id="Q3UNB8"/>
<dbReference type="Antibodypedia" id="62200">
    <property type="antibodies" value="8 antibodies from 4 providers"/>
</dbReference>
<dbReference type="Ensembl" id="ENSMUST00000100638.4">
    <property type="protein sequence ID" value="ENSMUSP00000098203.3"/>
    <property type="gene ID" value="ENSMUSG00000072571.4"/>
</dbReference>
<dbReference type="GeneID" id="619301"/>
<dbReference type="KEGG" id="mmu:619301"/>
<dbReference type="UCSC" id="uc007tnz.1">
    <property type="organism name" value="mouse"/>
</dbReference>
<dbReference type="AGR" id="MGI:3588246"/>
<dbReference type="CTD" id="643382"/>
<dbReference type="MGI" id="MGI:3588246">
    <property type="gene designation" value="Tmem253"/>
</dbReference>
<dbReference type="VEuPathDB" id="HostDB:ENSMUSG00000072571"/>
<dbReference type="eggNOG" id="ENOG502S0TM">
    <property type="taxonomic scope" value="Eukaryota"/>
</dbReference>
<dbReference type="GeneTree" id="ENSGT00400000023212"/>
<dbReference type="HOGENOM" id="CLU_1405518_0_0_1"/>
<dbReference type="InParanoid" id="Q3UNB8"/>
<dbReference type="OMA" id="PRLWKVQ"/>
<dbReference type="OrthoDB" id="82915at9989"/>
<dbReference type="PhylomeDB" id="Q3UNB8"/>
<dbReference type="TreeFam" id="TF354003"/>
<dbReference type="BioGRID-ORCS" id="619301">
    <property type="hits" value="3 hits in 75 CRISPR screens"/>
</dbReference>
<dbReference type="PRO" id="PR:Q3UNB8"/>
<dbReference type="Proteomes" id="UP000000589">
    <property type="component" value="Chromosome 14"/>
</dbReference>
<dbReference type="RNAct" id="Q3UNB8">
    <property type="molecule type" value="protein"/>
</dbReference>
<dbReference type="Bgee" id="ENSMUSG00000072571">
    <property type="expression patterns" value="Expressed in jejunum and 62 other cell types or tissues"/>
</dbReference>
<dbReference type="ExpressionAtlas" id="Q3UNB8">
    <property type="expression patterns" value="baseline and differential"/>
</dbReference>
<dbReference type="GO" id="GO:0016020">
    <property type="term" value="C:membrane"/>
    <property type="evidence" value="ECO:0007669"/>
    <property type="project" value="UniProtKB-SubCell"/>
</dbReference>
<dbReference type="InterPro" id="IPR038874">
    <property type="entry name" value="TMEM253"/>
</dbReference>
<dbReference type="PANTHER" id="PTHR37359">
    <property type="entry name" value="TRANSMEMBRANE PROTEIN 253"/>
    <property type="match status" value="1"/>
</dbReference>
<dbReference type="PANTHER" id="PTHR37359:SF1">
    <property type="entry name" value="TRANSMEMBRANE PROTEIN 253"/>
    <property type="match status" value="1"/>
</dbReference>
<accession>Q3UNB8</accession>
<feature type="chain" id="PRO_0000343723" description="Transmembrane protein 253">
    <location>
        <begin position="1"/>
        <end position="204"/>
    </location>
</feature>
<feature type="transmembrane region" description="Helical" evidence="1">
    <location>
        <begin position="33"/>
        <end position="53"/>
    </location>
</feature>
<feature type="transmembrane region" description="Helical" evidence="1">
    <location>
        <begin position="62"/>
        <end position="82"/>
    </location>
</feature>
<feature type="transmembrane region" description="Helical" evidence="1">
    <location>
        <begin position="96"/>
        <end position="116"/>
    </location>
</feature>
<feature type="transmembrane region" description="Helical" evidence="1">
    <location>
        <begin position="138"/>
        <end position="158"/>
    </location>
</feature>
<feature type="region of interest" description="Disordered" evidence="2">
    <location>
        <begin position="184"/>
        <end position="204"/>
    </location>
</feature>